<gene>
    <name type="primary">acyP</name>
    <name type="ordered locus">MS0845</name>
</gene>
<comment type="catalytic activity">
    <reaction>
        <text>an acyl phosphate + H2O = a carboxylate + phosphate + H(+)</text>
        <dbReference type="Rhea" id="RHEA:14965"/>
        <dbReference type="ChEBI" id="CHEBI:15377"/>
        <dbReference type="ChEBI" id="CHEBI:15378"/>
        <dbReference type="ChEBI" id="CHEBI:29067"/>
        <dbReference type="ChEBI" id="CHEBI:43474"/>
        <dbReference type="ChEBI" id="CHEBI:59918"/>
        <dbReference type="EC" id="3.6.1.7"/>
    </reaction>
</comment>
<comment type="similarity">
    <text evidence="2">Belongs to the acylphosphatase family.</text>
</comment>
<comment type="sequence caution" evidence="2">
    <conflict type="erroneous initiation">
        <sequence resource="EMBL-CDS" id="AAU37452"/>
    </conflict>
</comment>
<protein>
    <recommendedName>
        <fullName>Acylphosphatase</fullName>
        <ecNumber>3.6.1.7</ecNumber>
    </recommendedName>
    <alternativeName>
        <fullName>Acylphosphate phosphohydrolase</fullName>
    </alternativeName>
</protein>
<keyword id="KW-0378">Hydrolase</keyword>
<sequence>MLKKQFVVYGIVQGVGFRYFTWKKATEIGLNGIVKNQRDGSVYILAEGSASQIDSFRDWLSHGPPSARVDRVEENDYSGTHSFGLFSVEH</sequence>
<evidence type="ECO:0000255" key="1">
    <source>
        <dbReference type="PROSITE-ProRule" id="PRU00520"/>
    </source>
</evidence>
<evidence type="ECO:0000305" key="2"/>
<proteinExistence type="inferred from homology"/>
<reference key="1">
    <citation type="journal article" date="2004" name="Nat. Biotechnol.">
        <title>The genome sequence of the capnophilic rumen bacterium Mannheimia succiniciproducens.</title>
        <authorList>
            <person name="Hong S.H."/>
            <person name="Kim J.S."/>
            <person name="Lee S.Y."/>
            <person name="In Y.H."/>
            <person name="Choi S.S."/>
            <person name="Rih J.-K."/>
            <person name="Kim C.H."/>
            <person name="Jeong H."/>
            <person name="Hur C.G."/>
            <person name="Kim J.J."/>
        </authorList>
    </citation>
    <scope>NUCLEOTIDE SEQUENCE [LARGE SCALE GENOMIC DNA]</scope>
    <source>
        <strain>KCTC 0769BP / MBEL55E</strain>
    </source>
</reference>
<accession>Q65UA8</accession>
<organism>
    <name type="scientific">Mannheimia succiniciproducens (strain KCTC 0769BP / MBEL55E)</name>
    <dbReference type="NCBI Taxonomy" id="221988"/>
    <lineage>
        <taxon>Bacteria</taxon>
        <taxon>Pseudomonadati</taxon>
        <taxon>Pseudomonadota</taxon>
        <taxon>Gammaproteobacteria</taxon>
        <taxon>Pasteurellales</taxon>
        <taxon>Pasteurellaceae</taxon>
        <taxon>Basfia</taxon>
    </lineage>
</organism>
<feature type="chain" id="PRO_0000326743" description="Acylphosphatase">
    <location>
        <begin position="1"/>
        <end position="90"/>
    </location>
</feature>
<feature type="domain" description="Acylphosphatase-like" evidence="1">
    <location>
        <begin position="3"/>
        <end position="90"/>
    </location>
</feature>
<feature type="active site" evidence="1">
    <location>
        <position position="18"/>
    </location>
</feature>
<feature type="active site" evidence="1">
    <location>
        <position position="36"/>
    </location>
</feature>
<dbReference type="EC" id="3.6.1.7"/>
<dbReference type="EMBL" id="AE016827">
    <property type="protein sequence ID" value="AAU37452.1"/>
    <property type="status" value="ALT_INIT"/>
    <property type="molecule type" value="Genomic_DNA"/>
</dbReference>
<dbReference type="RefSeq" id="WP_041639639.1">
    <property type="nucleotide sequence ID" value="NC_006300.1"/>
</dbReference>
<dbReference type="SMR" id="Q65UA8"/>
<dbReference type="STRING" id="221988.MS0845"/>
<dbReference type="KEGG" id="msu:MS0845"/>
<dbReference type="eggNOG" id="COG1254">
    <property type="taxonomic scope" value="Bacteria"/>
</dbReference>
<dbReference type="HOGENOM" id="CLU_141932_2_1_6"/>
<dbReference type="OrthoDB" id="5295388at2"/>
<dbReference type="Proteomes" id="UP000000607">
    <property type="component" value="Chromosome"/>
</dbReference>
<dbReference type="GO" id="GO:0003998">
    <property type="term" value="F:acylphosphatase activity"/>
    <property type="evidence" value="ECO:0007669"/>
    <property type="project" value="UniProtKB-EC"/>
</dbReference>
<dbReference type="Gene3D" id="3.30.70.100">
    <property type="match status" value="1"/>
</dbReference>
<dbReference type="InterPro" id="IPR020456">
    <property type="entry name" value="Acylphosphatase"/>
</dbReference>
<dbReference type="InterPro" id="IPR001792">
    <property type="entry name" value="Acylphosphatase-like_dom"/>
</dbReference>
<dbReference type="InterPro" id="IPR036046">
    <property type="entry name" value="Acylphosphatase-like_dom_sf"/>
</dbReference>
<dbReference type="InterPro" id="IPR017968">
    <property type="entry name" value="Acylphosphatase_CS"/>
</dbReference>
<dbReference type="NCBIfam" id="NF011019">
    <property type="entry name" value="PRK14448.1"/>
    <property type="match status" value="1"/>
</dbReference>
<dbReference type="PANTHER" id="PTHR47268">
    <property type="entry name" value="ACYLPHOSPHATASE"/>
    <property type="match status" value="1"/>
</dbReference>
<dbReference type="PANTHER" id="PTHR47268:SF4">
    <property type="entry name" value="ACYLPHOSPHATASE"/>
    <property type="match status" value="1"/>
</dbReference>
<dbReference type="Pfam" id="PF00708">
    <property type="entry name" value="Acylphosphatase"/>
    <property type="match status" value="1"/>
</dbReference>
<dbReference type="SUPFAM" id="SSF54975">
    <property type="entry name" value="Acylphosphatase/BLUF domain-like"/>
    <property type="match status" value="1"/>
</dbReference>
<dbReference type="PROSITE" id="PS00150">
    <property type="entry name" value="ACYLPHOSPHATASE_1"/>
    <property type="match status" value="1"/>
</dbReference>
<dbReference type="PROSITE" id="PS51160">
    <property type="entry name" value="ACYLPHOSPHATASE_3"/>
    <property type="match status" value="1"/>
</dbReference>
<name>ACYP_MANSM</name>